<reference key="1">
    <citation type="journal article" date="2000" name="DNA Res.">
        <title>Complete structure of the chloroplast genome of a legume, Lotus japonicus.</title>
        <authorList>
            <person name="Kato T."/>
            <person name="Kaneko T."/>
            <person name="Sato S."/>
            <person name="Nakamura Y."/>
            <person name="Tabata S."/>
        </authorList>
    </citation>
    <scope>NUCLEOTIDE SEQUENCE [LARGE SCALE GENOMIC DNA]</scope>
    <source>
        <strain>cv. Miyakojima MG-20</strain>
    </source>
</reference>
<proteinExistence type="inferred from homology"/>
<geneLocation type="chloroplast"/>
<evidence type="ECO:0000255" key="1">
    <source>
        <dbReference type="HAMAP-Rule" id="MF_00433"/>
    </source>
</evidence>
<name>PETL_LOTJA</name>
<sequence length="31" mass="3486">MPTITSYFGFLLAVLTITSGLFISLRKLRLI</sequence>
<feature type="chain" id="PRO_0000220453" description="Cytochrome b6-f complex subunit 6">
    <location>
        <begin position="1"/>
        <end position="31"/>
    </location>
</feature>
<feature type="transmembrane region" description="Helical" evidence="1">
    <location>
        <begin position="3"/>
        <end position="23"/>
    </location>
</feature>
<accession>Q9BBR4</accession>
<keyword id="KW-0150">Chloroplast</keyword>
<keyword id="KW-0249">Electron transport</keyword>
<keyword id="KW-0472">Membrane</keyword>
<keyword id="KW-0602">Photosynthesis</keyword>
<keyword id="KW-0934">Plastid</keyword>
<keyword id="KW-0793">Thylakoid</keyword>
<keyword id="KW-0812">Transmembrane</keyword>
<keyword id="KW-1133">Transmembrane helix</keyword>
<keyword id="KW-0813">Transport</keyword>
<protein>
    <recommendedName>
        <fullName evidence="1">Cytochrome b6-f complex subunit 6</fullName>
    </recommendedName>
    <alternativeName>
        <fullName evidence="1">Cytochrome b6-f complex subunit PetL</fullName>
    </alternativeName>
    <alternativeName>
        <fullName evidence="1">Cytochrome b6-f complex subunit VI</fullName>
    </alternativeName>
</protein>
<dbReference type="EMBL" id="AP002983">
    <property type="protein sequence ID" value="BAB33214.1"/>
    <property type="molecule type" value="Genomic_DNA"/>
</dbReference>
<dbReference type="RefSeq" id="NP_084816.1">
    <property type="nucleotide sequence ID" value="NC_002694.1"/>
</dbReference>
<dbReference type="SMR" id="Q9BBR4"/>
<dbReference type="GeneID" id="802915"/>
<dbReference type="GO" id="GO:0009535">
    <property type="term" value="C:chloroplast thylakoid membrane"/>
    <property type="evidence" value="ECO:0007669"/>
    <property type="project" value="UniProtKB-SubCell"/>
</dbReference>
<dbReference type="GO" id="GO:0009512">
    <property type="term" value="C:cytochrome b6f complex"/>
    <property type="evidence" value="ECO:0007669"/>
    <property type="project" value="InterPro"/>
</dbReference>
<dbReference type="GO" id="GO:0045158">
    <property type="term" value="F:electron transporter, transferring electrons within cytochrome b6/f complex of photosystem II activity"/>
    <property type="evidence" value="ECO:0007669"/>
    <property type="project" value="UniProtKB-UniRule"/>
</dbReference>
<dbReference type="GO" id="GO:0015979">
    <property type="term" value="P:photosynthesis"/>
    <property type="evidence" value="ECO:0007669"/>
    <property type="project" value="UniProtKB-KW"/>
</dbReference>
<dbReference type="HAMAP" id="MF_00433">
    <property type="entry name" value="Cytb6_f_PetL"/>
    <property type="match status" value="1"/>
</dbReference>
<dbReference type="InterPro" id="IPR007802">
    <property type="entry name" value="Cyt_b6/f_cplx_su6"/>
</dbReference>
<dbReference type="PANTHER" id="PTHR37266">
    <property type="entry name" value="CYTOCHROME B6-F COMPLEX SUBUNIT 6"/>
    <property type="match status" value="1"/>
</dbReference>
<dbReference type="PANTHER" id="PTHR37266:SF1">
    <property type="entry name" value="CYTOCHROME B6-F COMPLEX SUBUNIT 6"/>
    <property type="match status" value="1"/>
</dbReference>
<dbReference type="Pfam" id="PF05115">
    <property type="entry name" value="PetL"/>
    <property type="match status" value="1"/>
</dbReference>
<gene>
    <name evidence="1" type="primary">petL</name>
</gene>
<comment type="function">
    <text evidence="1">Component of the cytochrome b6-f complex, which mediates electron transfer between photosystem II (PSII) and photosystem I (PSI), cyclic electron flow around PSI, and state transitions. PetL is important for photoautotrophic growth as well as for electron transfer efficiency and stability of the cytochrome b6-f complex.</text>
</comment>
<comment type="subunit">
    <text evidence="1">The 4 large subunits of the cytochrome b6-f complex are cytochrome b6, subunit IV (17 kDa polypeptide, PetD), cytochrome f and the Rieske protein, while the 4 small subunits are PetG, PetL, PetM and PetN. The complex functions as a dimer.</text>
</comment>
<comment type="subcellular location">
    <subcellularLocation>
        <location evidence="1">Plastid</location>
        <location evidence="1">Chloroplast thylakoid membrane</location>
        <topology evidence="1">Single-pass membrane protein</topology>
    </subcellularLocation>
</comment>
<comment type="similarity">
    <text evidence="1">Belongs to the PetL family.</text>
</comment>
<organism>
    <name type="scientific">Lotus japonicus</name>
    <name type="common">Lotus corniculatus var. japonicus</name>
    <dbReference type="NCBI Taxonomy" id="34305"/>
    <lineage>
        <taxon>Eukaryota</taxon>
        <taxon>Viridiplantae</taxon>
        <taxon>Streptophyta</taxon>
        <taxon>Embryophyta</taxon>
        <taxon>Tracheophyta</taxon>
        <taxon>Spermatophyta</taxon>
        <taxon>Magnoliopsida</taxon>
        <taxon>eudicotyledons</taxon>
        <taxon>Gunneridae</taxon>
        <taxon>Pentapetalae</taxon>
        <taxon>rosids</taxon>
        <taxon>fabids</taxon>
        <taxon>Fabales</taxon>
        <taxon>Fabaceae</taxon>
        <taxon>Papilionoideae</taxon>
        <taxon>50 kb inversion clade</taxon>
        <taxon>NPAAA clade</taxon>
        <taxon>Hologalegina</taxon>
        <taxon>robinioid clade</taxon>
        <taxon>Loteae</taxon>
        <taxon>Lotus</taxon>
    </lineage>
</organism>